<comment type="function">
    <text evidence="1">One of the primary rRNA binding proteins, it binds directly near the 3'-end of the 23S rRNA, where it nucleates assembly of the 50S subunit.</text>
</comment>
<comment type="subunit">
    <text evidence="1">Part of the 50S ribosomal subunit. Forms a cluster with proteins L14 and L19.</text>
</comment>
<comment type="PTM">
    <text evidence="1">Methylated by PrmB.</text>
</comment>
<comment type="similarity">
    <text evidence="1">Belongs to the universal ribosomal protein uL3 family.</text>
</comment>
<name>RL3_YERPA</name>
<reference key="1">
    <citation type="journal article" date="2006" name="J. Bacteriol.">
        <title>Complete genome sequence of Yersinia pestis strains Antiqua and Nepal516: evidence of gene reduction in an emerging pathogen.</title>
        <authorList>
            <person name="Chain P.S.G."/>
            <person name="Hu P."/>
            <person name="Malfatti S.A."/>
            <person name="Radnedge L."/>
            <person name="Larimer F."/>
            <person name="Vergez L.M."/>
            <person name="Worsham P."/>
            <person name="Chu M.C."/>
            <person name="Andersen G.L."/>
        </authorList>
    </citation>
    <scope>NUCLEOTIDE SEQUENCE [LARGE SCALE GENOMIC DNA]</scope>
    <source>
        <strain>Antiqua</strain>
    </source>
</reference>
<feature type="chain" id="PRO_1000052168" description="Large ribosomal subunit protein uL3">
    <location>
        <begin position="1"/>
        <end position="209"/>
    </location>
</feature>
<feature type="region of interest" description="Disordered" evidence="2">
    <location>
        <begin position="133"/>
        <end position="152"/>
    </location>
</feature>
<feature type="modified residue" description="N5-methylglutamine" evidence="1">
    <location>
        <position position="150"/>
    </location>
</feature>
<keyword id="KW-0488">Methylation</keyword>
<keyword id="KW-0687">Ribonucleoprotein</keyword>
<keyword id="KW-0689">Ribosomal protein</keyword>
<keyword id="KW-0694">RNA-binding</keyword>
<keyword id="KW-0699">rRNA-binding</keyword>
<dbReference type="EMBL" id="CP000308">
    <property type="protein sequence ID" value="ABG15225.1"/>
    <property type="molecule type" value="Genomic_DNA"/>
</dbReference>
<dbReference type="RefSeq" id="WP_002218932.1">
    <property type="nucleotide sequence ID" value="NZ_CP009906.1"/>
</dbReference>
<dbReference type="SMR" id="Q1C2U7"/>
<dbReference type="GeneID" id="96663196"/>
<dbReference type="KEGG" id="ypa:YPA_3263"/>
<dbReference type="Proteomes" id="UP000001971">
    <property type="component" value="Chromosome"/>
</dbReference>
<dbReference type="GO" id="GO:0022625">
    <property type="term" value="C:cytosolic large ribosomal subunit"/>
    <property type="evidence" value="ECO:0007669"/>
    <property type="project" value="TreeGrafter"/>
</dbReference>
<dbReference type="GO" id="GO:0019843">
    <property type="term" value="F:rRNA binding"/>
    <property type="evidence" value="ECO:0007669"/>
    <property type="project" value="UniProtKB-UniRule"/>
</dbReference>
<dbReference type="GO" id="GO:0003735">
    <property type="term" value="F:structural constituent of ribosome"/>
    <property type="evidence" value="ECO:0007669"/>
    <property type="project" value="InterPro"/>
</dbReference>
<dbReference type="GO" id="GO:0006412">
    <property type="term" value="P:translation"/>
    <property type="evidence" value="ECO:0007669"/>
    <property type="project" value="UniProtKB-UniRule"/>
</dbReference>
<dbReference type="FunFam" id="2.40.30.10:FF:000004">
    <property type="entry name" value="50S ribosomal protein L3"/>
    <property type="match status" value="1"/>
</dbReference>
<dbReference type="FunFam" id="3.30.160.810:FF:000001">
    <property type="entry name" value="50S ribosomal protein L3"/>
    <property type="match status" value="1"/>
</dbReference>
<dbReference type="Gene3D" id="3.30.160.810">
    <property type="match status" value="1"/>
</dbReference>
<dbReference type="Gene3D" id="2.40.30.10">
    <property type="entry name" value="Translation factors"/>
    <property type="match status" value="1"/>
</dbReference>
<dbReference type="HAMAP" id="MF_01325_B">
    <property type="entry name" value="Ribosomal_uL3_B"/>
    <property type="match status" value="1"/>
</dbReference>
<dbReference type="InterPro" id="IPR000597">
    <property type="entry name" value="Ribosomal_uL3"/>
</dbReference>
<dbReference type="InterPro" id="IPR019927">
    <property type="entry name" value="Ribosomal_uL3_bac/org-type"/>
</dbReference>
<dbReference type="InterPro" id="IPR019926">
    <property type="entry name" value="Ribosomal_uL3_CS"/>
</dbReference>
<dbReference type="InterPro" id="IPR009000">
    <property type="entry name" value="Transl_B-barrel_sf"/>
</dbReference>
<dbReference type="NCBIfam" id="TIGR03625">
    <property type="entry name" value="L3_bact"/>
    <property type="match status" value="1"/>
</dbReference>
<dbReference type="PANTHER" id="PTHR11229">
    <property type="entry name" value="50S RIBOSOMAL PROTEIN L3"/>
    <property type="match status" value="1"/>
</dbReference>
<dbReference type="PANTHER" id="PTHR11229:SF16">
    <property type="entry name" value="LARGE RIBOSOMAL SUBUNIT PROTEIN UL3C"/>
    <property type="match status" value="1"/>
</dbReference>
<dbReference type="Pfam" id="PF00297">
    <property type="entry name" value="Ribosomal_L3"/>
    <property type="match status" value="1"/>
</dbReference>
<dbReference type="SUPFAM" id="SSF50447">
    <property type="entry name" value="Translation proteins"/>
    <property type="match status" value="1"/>
</dbReference>
<dbReference type="PROSITE" id="PS00474">
    <property type="entry name" value="RIBOSOMAL_L3"/>
    <property type="match status" value="1"/>
</dbReference>
<sequence>MIGLVGKKVGMTRIFTEDGVSIPVTVIEIEANRVTQVKSLENDGYRAVQVTTGAKKANRVTKPEAGHFAKAGVEAGRGLWEFRLPEGQEFTAGQEISVEIFADVKKVDVTGTSKGKGFAGTVKRWNFRTQDATHGNSLSHRVPGSIGQNQTPGKVFKGKKMAGHMGDERVTVQSLDVVRVDAERNLLLVKGAVPGATGGNLIVKPAVKA</sequence>
<accession>Q1C2U7</accession>
<proteinExistence type="inferred from homology"/>
<organism>
    <name type="scientific">Yersinia pestis bv. Antiqua (strain Antiqua)</name>
    <dbReference type="NCBI Taxonomy" id="360102"/>
    <lineage>
        <taxon>Bacteria</taxon>
        <taxon>Pseudomonadati</taxon>
        <taxon>Pseudomonadota</taxon>
        <taxon>Gammaproteobacteria</taxon>
        <taxon>Enterobacterales</taxon>
        <taxon>Yersiniaceae</taxon>
        <taxon>Yersinia</taxon>
    </lineage>
</organism>
<gene>
    <name evidence="1" type="primary">rplC</name>
    <name type="ordered locus">YPA_3263</name>
</gene>
<protein>
    <recommendedName>
        <fullName evidence="1">Large ribosomal subunit protein uL3</fullName>
    </recommendedName>
    <alternativeName>
        <fullName evidence="3">50S ribosomal protein L3</fullName>
    </alternativeName>
</protein>
<evidence type="ECO:0000255" key="1">
    <source>
        <dbReference type="HAMAP-Rule" id="MF_01325"/>
    </source>
</evidence>
<evidence type="ECO:0000256" key="2">
    <source>
        <dbReference type="SAM" id="MobiDB-lite"/>
    </source>
</evidence>
<evidence type="ECO:0000305" key="3"/>